<evidence type="ECO:0000250" key="1">
    <source>
        <dbReference type="UniProtKB" id="L7X8J4"/>
    </source>
</evidence>
<evidence type="ECO:0000250" key="2">
    <source>
        <dbReference type="UniProtKB" id="Q4WAY4"/>
    </source>
</evidence>
<evidence type="ECO:0000255" key="3"/>
<evidence type="ECO:0000255" key="4">
    <source>
        <dbReference type="PROSITE-ProRule" id="PRU00258"/>
    </source>
</evidence>
<evidence type="ECO:0000255" key="5">
    <source>
        <dbReference type="PROSITE-ProRule" id="PRU01348"/>
    </source>
</evidence>
<evidence type="ECO:0000255" key="6">
    <source>
        <dbReference type="PROSITE-ProRule" id="PRU01363"/>
    </source>
</evidence>
<evidence type="ECO:0000303" key="7">
    <source>
    </source>
</evidence>
<evidence type="ECO:0000305" key="8">
    <source>
    </source>
</evidence>
<feature type="chain" id="PRO_0000442400" description="Highly reducing polyketide synthase ATR6">
    <location>
        <begin position="1"/>
        <end position="2435"/>
    </location>
</feature>
<feature type="domain" description="Ketosynthase family 3 (KS3)" evidence="5">
    <location>
        <begin position="18"/>
        <end position="450"/>
    </location>
</feature>
<feature type="domain" description="PKS/mFAS DH" evidence="6">
    <location>
        <begin position="979"/>
        <end position="1296"/>
    </location>
</feature>
<feature type="domain" description="Carrier" evidence="4">
    <location>
        <begin position="2353"/>
        <end position="2429"/>
    </location>
</feature>
<feature type="region of interest" description="Malonyl-CoA:ACP transacylase (MAT) domain" evidence="3">
    <location>
        <begin position="586"/>
        <end position="883"/>
    </location>
</feature>
<feature type="region of interest" description="Dehydratase (DH) domain" evidence="3">
    <location>
        <begin position="979"/>
        <end position="1291"/>
    </location>
</feature>
<feature type="region of interest" description="N-terminal hotdog fold" evidence="6">
    <location>
        <begin position="979"/>
        <end position="1125"/>
    </location>
</feature>
<feature type="region of interest" description="C-terminal hotdog fold" evidence="6">
    <location>
        <begin position="1141"/>
        <end position="1296"/>
    </location>
</feature>
<feature type="region of interest" description="Enoylreductase (ER) domain" evidence="3">
    <location>
        <begin position="1724"/>
        <end position="2037"/>
    </location>
</feature>
<feature type="region of interest" description="Catalytic ketoreductase (KRc) domain" evidence="3">
    <location>
        <begin position="2062"/>
        <end position="2301"/>
    </location>
</feature>
<feature type="active site" description="For beta-ketoacyl synthase activity" evidence="5">
    <location>
        <position position="192"/>
    </location>
</feature>
<feature type="active site" description="For beta-ketoacyl synthase activity" evidence="5">
    <location>
        <position position="331"/>
    </location>
</feature>
<feature type="active site" description="For beta-ketoacyl synthase activity" evidence="5">
    <location>
        <position position="371"/>
    </location>
</feature>
<feature type="active site" description="For malonyltransferase activity" evidence="1">
    <location>
        <position position="682"/>
    </location>
</feature>
<feature type="active site" description="For beta-hydroxyacyl dehydratase activity" evidence="1">
    <location>
        <position position="1011"/>
    </location>
</feature>
<feature type="modified residue" description="O-(pantetheine 4'-phosphoryl)serine" evidence="4">
    <location>
        <position position="2389"/>
    </location>
</feature>
<proteinExistence type="inferred from homology"/>
<name>ATR6_STAC4</name>
<comment type="function">
    <text evidence="2 8">Highly reducing polyketide synthase; part of the core atranone cluster (CAC) which products are predicted to catalyze most or all steps of mycotoxin atranone synthesis, starting from geranylgeranyl pyrophosphate (GGPP) (PubMed:25015739). The initial cyclization of GGPP to dolabellane is probably performed by the terpene cyclase ATR13 (PubMed:25015739). The Baeyer-Villiger oxidation near the end of the atranone synthesis, which converts atranones D and E to atranones F and G is predicted to be catalyzed by the monooxygenase ATR8 (PubMed:25015739). Of the CAC's other predicted gene products, the reducing PKS ATR6 might synthesize a polyketide chain (PubMed:25015739). This polyketide is probably transferred onto the atranone backbone by the polyketide transferase ATR5 (By similarity). Other predicted CAC products include 4 oxygenases (ATR2, ATR3, ATR4, and ATR14), 3 short-chain reductases (ATR7, ATR9, and ATR10), and a methyltransferase (ATR12) (PubMed:25015739). These may all be involved in the various steps of atranone biosynthesis, although their specific roles must await experimental determination (PubMed:25015739).</text>
</comment>
<comment type="pathway">
    <text evidence="8">Mycotoxin biosynthesis.</text>
</comment>
<reference key="1">
    <citation type="journal article" date="2014" name="BMC Genomics">
        <title>Comparative genome sequencing reveals chemotype-specific gene clusters in the toxigenic black mold Stachybotrys.</title>
        <authorList>
            <person name="Semeiks J."/>
            <person name="Borek D."/>
            <person name="Otwinowski Z."/>
            <person name="Grishin N.V."/>
        </authorList>
    </citation>
    <scope>NUCLEOTIDE SEQUENCE [LARGE SCALE GENOMIC DNA]</scope>
    <scope>IDENTIFICATION</scope>
    <scope>FUNCTION</scope>
    <source>
        <strain>IBT 40285</strain>
    </source>
</reference>
<gene>
    <name evidence="7" type="primary">ATR6</name>
    <name type="ORF">S40285_03331</name>
</gene>
<organism>
    <name type="scientific">Stachybotrys chlorohalonatus (strain IBT 40285)</name>
    <dbReference type="NCBI Taxonomy" id="1283841"/>
    <lineage>
        <taxon>Eukaryota</taxon>
        <taxon>Fungi</taxon>
        <taxon>Dikarya</taxon>
        <taxon>Ascomycota</taxon>
        <taxon>Pezizomycotina</taxon>
        <taxon>Sordariomycetes</taxon>
        <taxon>Hypocreomycetidae</taxon>
        <taxon>Hypocreales</taxon>
        <taxon>Stachybotryaceae</taxon>
        <taxon>Stachybotrys</taxon>
    </lineage>
</organism>
<keyword id="KW-0511">Multifunctional enzyme</keyword>
<keyword id="KW-0560">Oxidoreductase</keyword>
<keyword id="KW-0596">Phosphopantetheine</keyword>
<keyword id="KW-0597">Phosphoprotein</keyword>
<keyword id="KW-1185">Reference proteome</keyword>
<keyword id="KW-0808">Transferase</keyword>
<protein>
    <recommendedName>
        <fullName evidence="7">Highly reducing polyketide synthase ATR6</fullName>
        <ecNumber evidence="8">2.3.1.-</ecNumber>
    </recommendedName>
    <alternativeName>
        <fullName evidence="7">Core atranone cluster (CAC) protein 6</fullName>
    </alternativeName>
</protein>
<sequence>MDSEAPTPTSSSFALPYAEPIAIVSAACRLPGHIQNPHQLWQFLQAGGIATSDVVPESRYNVAGHFDGSGRPGTLKTPGGMFIEDIDLGAFDAPFFHIGKSDAVSMDPQQRQLLEVVYECLENGGITMQGIDGDQIGCFVASYSADWHEMQSRHPASRAPGTTAGTSRAILSNRISHFFNIKGSSWTIDTACSGGLVGVDAACQYLRAGKLNGAIVAAAQLWMSPEYNEELGTMRAAASSTGRCHSFDAKADGYCRSEAVNAVYLKRLSDALRDGDPVRAVIRGTANNSDGRTPGLHSPNSDAQAAAIRAAYADAGIDSTQYTKTAFMECHATGTPAGDPSEVRGSASVLASMRPPSDPLIIGTIKSNLGHAEPGAGISGLMKAMMAVEKGIIPGNPTFITPNPNIDFAGLRVRASQRNMRWPQSTKDYRRASVASSGFGGSNAHVVLDNAEHYMQHHFLSVQPQFRTYVSSYAETGDVLSMLSGFGLGAANSSDKLAPLPNVLVFSAHDADSLKRQMGALSAHLVDPRVAIKLSDLSYTLSERRSRHFHRSFIVCRPNKGGNIETLPTDLAKYAMKPTSPVRIGFVFTGQGAQWSGMGADLIRLFPKTAKAVVDELDAALQELPADVRPSWSLLAELTEPRSSEHLREPEFSQPLVTALQLALLAVLKSWNVTADAVVGHSSGEIAAACSAGLLTPGQAILTAYFRGQAAKQVVMEGSMGMLAVGLGSAGVQKYLEDTSRAGKVVIACYNSPASVTLSGPTSLLSELAQVIQTDGHFARLLQVNLPYHSHYMSAIGDRYEKLLLDHGRLDEIQGETATRKIPMISSVSTIVLEGSKSCSAAYWKSNMVSAVQFDGACKRIVADQDLSANLLIEIGPSAALGGPIGQIIKQAGIDNVTYTSAAQRGTDSILALFGVAGQLFLHDCPVSLDHVNTDETALTEPKPAVIIDLPNYRWNHSTRYWHESLASKDWRFRNFPEHDLLGGKVLGTAWESPSWTKTLRLEDVPWLRDHKIGSEILFPASGYIAMAVEAARQATISTARSQNKAAPSAHAYHYVLRDVHFERGLVLEDETDTTLMLSLAPVARLGVKWWVFKVMSLASGGSSSSSDSWIEHSNGLVRLALNASEPLPRVTPDNYSLPLQYPTPARFWYKAFENAGYGYGPGFQKQSYIECTEGSFSARSTIMLNPPLSKWEPQPNYPLHPASMESCIQATLTSMYRGDRAGINNVLVPNAIDRIILSGDTWRSNEAVSVTTSESSSGITSKPLSNASLFDPTNGVLIIDLRGISMTSVGLQGNVCSFSTYTRVEWKPDICHLDSDTKIRRAILDLTDGTGDFVQEVLDLAAHKKPNMRVLEVDLTGGQPRSLWLSGNETSRITRAATSEFNYASDRPESVLSAQDLYSDMSSGYTSRFTLLPITSQSFVAPPELCRSDLVLIRTSQLPSMETASILTRNARCLLTEGGTIVLHVLDVSKYSKVGQESLREALSRGKFSKIRQAADGLFVAEATDADTAYSQGKSLVVLHFSTSPVFSWSSAVITSLIDKGWPITELTLEEGCRLTELPAKATILVMDEVNRPLFASMEEYQLEAIQSIVQRDCSLLWVTQGSQMHVSSPLKAICHGVFRSVRSMDPNARIVTLDVDSAAEDQLAKMADILHTVLLQVRVTPESLPADFEFVERGGLLYISRLRPAQVDNESRSDGDKDGLQPVPVDLHSTESTIGLVSGRPGILDTLHFAELGPGRLLVLGPEDIEVEIFAASVDDGDYALAKNLDPEDSTRLGYGGAGIVTRTGDSITDIRAGQRVALFHGGCVANRIVVARQVVFSVPDTMTFEDAATLPTAFVPAIYSIYHLAQLRQGQRVLIHSAANAVGIACVQLCQGLSCKPYVTVDSDEERKFLAEEVGVSSDHILLLNSENFAREMQDSAQNHGFDVIINTSQHHLPDQGWGVVSPGGVHVALGQTINDRSLLPMDYFTNNRSFCSLDIRTLPLDKLASPRACSQLSDLIYGSSIKHMLPKAVFPCHGVQAALQSCHDHNRLRNVVISTGPDKDVRILVKPEKQQPRCTFAPEQTYLLVGKLKGVSGSLALHLARCGAKYLVIMSPKNSENSENISRSIRAMGCSLRFFEGDAASIDDMRRCYGQISGPIGGIVHGAAAQSFRLMSHETYQATLARSVLSAWNLHTVSLERDDSVPFFIMLSSTAGVVGDEKQPHHAGSDVFHNALATYRCGLGLPSTSINLGPINDDALLPDSEKTFKTLSSGVWFGVNEAVFRRIIDHSLSREHHGAQRHFELASQAQIITGIAVPQPGSSDILHDVRLLGLKLAQSGNSSSAASGRDDSQNREMQTFLLCARSTNPDPAVLLSSAVGVLQAQFTKMLRLNELMDPAYPLNTYGMDSLAAAEPRSWVRTAFGVQLTTLDVVNAASLVVLCQKIISRMGLGKEV</sequence>
<accession>A0A084R1H6</accession>
<dbReference type="EC" id="2.3.1.-" evidence="8"/>
<dbReference type="EMBL" id="KL659308">
    <property type="protein sequence ID" value="KFA70061.1"/>
    <property type="molecule type" value="Genomic_DNA"/>
</dbReference>
<dbReference type="SMR" id="A0A084R1H6"/>
<dbReference type="STRING" id="1283841.A0A084R1H6"/>
<dbReference type="HOGENOM" id="CLU_000022_31_0_1"/>
<dbReference type="InParanoid" id="A0A084R1H6"/>
<dbReference type="OMA" id="ETGYLEC"/>
<dbReference type="OrthoDB" id="329835at2759"/>
<dbReference type="Proteomes" id="UP000028524">
    <property type="component" value="Unassembled WGS sequence"/>
</dbReference>
<dbReference type="GO" id="GO:0004312">
    <property type="term" value="F:fatty acid synthase activity"/>
    <property type="evidence" value="ECO:0007669"/>
    <property type="project" value="TreeGrafter"/>
</dbReference>
<dbReference type="GO" id="GO:0016491">
    <property type="term" value="F:oxidoreductase activity"/>
    <property type="evidence" value="ECO:0007669"/>
    <property type="project" value="UniProtKB-KW"/>
</dbReference>
<dbReference type="GO" id="GO:0031177">
    <property type="term" value="F:phosphopantetheine binding"/>
    <property type="evidence" value="ECO:0007669"/>
    <property type="project" value="InterPro"/>
</dbReference>
<dbReference type="GO" id="GO:0006633">
    <property type="term" value="P:fatty acid biosynthetic process"/>
    <property type="evidence" value="ECO:0007669"/>
    <property type="project" value="TreeGrafter"/>
</dbReference>
<dbReference type="GO" id="GO:0044550">
    <property type="term" value="P:secondary metabolite biosynthetic process"/>
    <property type="evidence" value="ECO:0007669"/>
    <property type="project" value="TreeGrafter"/>
</dbReference>
<dbReference type="CDD" id="cd05195">
    <property type="entry name" value="enoyl_red"/>
    <property type="match status" value="1"/>
</dbReference>
<dbReference type="CDD" id="cd00833">
    <property type="entry name" value="PKS"/>
    <property type="match status" value="1"/>
</dbReference>
<dbReference type="Gene3D" id="3.30.70.3290">
    <property type="match status" value="1"/>
</dbReference>
<dbReference type="Gene3D" id="3.40.47.10">
    <property type="match status" value="1"/>
</dbReference>
<dbReference type="Gene3D" id="3.40.366.10">
    <property type="entry name" value="Malonyl-Coenzyme A Acyl Carrier Protein, domain 2"/>
    <property type="match status" value="1"/>
</dbReference>
<dbReference type="Gene3D" id="3.90.180.10">
    <property type="entry name" value="Medium-chain alcohol dehydrogenases, catalytic domain"/>
    <property type="match status" value="1"/>
</dbReference>
<dbReference type="Gene3D" id="3.40.50.720">
    <property type="entry name" value="NAD(P)-binding Rossmann-like Domain"/>
    <property type="match status" value="3"/>
</dbReference>
<dbReference type="Gene3D" id="3.10.129.110">
    <property type="entry name" value="Polyketide synthase dehydratase"/>
    <property type="match status" value="1"/>
</dbReference>
<dbReference type="InterPro" id="IPR001227">
    <property type="entry name" value="Ac_transferase_dom_sf"/>
</dbReference>
<dbReference type="InterPro" id="IPR036736">
    <property type="entry name" value="ACP-like_sf"/>
</dbReference>
<dbReference type="InterPro" id="IPR014043">
    <property type="entry name" value="Acyl_transferase_dom"/>
</dbReference>
<dbReference type="InterPro" id="IPR016035">
    <property type="entry name" value="Acyl_Trfase/lysoPLipase"/>
</dbReference>
<dbReference type="InterPro" id="IPR011032">
    <property type="entry name" value="GroES-like_sf"/>
</dbReference>
<dbReference type="InterPro" id="IPR014031">
    <property type="entry name" value="Ketoacyl_synth_C"/>
</dbReference>
<dbReference type="InterPro" id="IPR014030">
    <property type="entry name" value="Ketoacyl_synth_N"/>
</dbReference>
<dbReference type="InterPro" id="IPR016036">
    <property type="entry name" value="Malonyl_transacylase_ACP-bd"/>
</dbReference>
<dbReference type="InterPro" id="IPR036291">
    <property type="entry name" value="NAD(P)-bd_dom_sf"/>
</dbReference>
<dbReference type="InterPro" id="IPR056501">
    <property type="entry name" value="NAD-bd_HRPKS_sdrA"/>
</dbReference>
<dbReference type="InterPro" id="IPR032821">
    <property type="entry name" value="PKS_assoc"/>
</dbReference>
<dbReference type="InterPro" id="IPR020841">
    <property type="entry name" value="PKS_Beta-ketoAc_synthase_dom"/>
</dbReference>
<dbReference type="InterPro" id="IPR042104">
    <property type="entry name" value="PKS_dehydratase_sf"/>
</dbReference>
<dbReference type="InterPro" id="IPR020807">
    <property type="entry name" value="PKS_DH"/>
</dbReference>
<dbReference type="InterPro" id="IPR049551">
    <property type="entry name" value="PKS_DH_C"/>
</dbReference>
<dbReference type="InterPro" id="IPR049552">
    <property type="entry name" value="PKS_DH_N"/>
</dbReference>
<dbReference type="InterPro" id="IPR020843">
    <property type="entry name" value="PKS_ER"/>
</dbReference>
<dbReference type="InterPro" id="IPR013968">
    <property type="entry name" value="PKS_KR"/>
</dbReference>
<dbReference type="InterPro" id="IPR049900">
    <property type="entry name" value="PKS_mFAS_DH"/>
</dbReference>
<dbReference type="InterPro" id="IPR050091">
    <property type="entry name" value="PKS_NRPS_Biosynth_Enz"/>
</dbReference>
<dbReference type="InterPro" id="IPR020806">
    <property type="entry name" value="PKS_PP-bd"/>
</dbReference>
<dbReference type="InterPro" id="IPR009081">
    <property type="entry name" value="PP-bd_ACP"/>
</dbReference>
<dbReference type="InterPro" id="IPR016039">
    <property type="entry name" value="Thiolase-like"/>
</dbReference>
<dbReference type="PANTHER" id="PTHR43775:SF18">
    <property type="entry name" value="ENZYME, PUTATIVE (JCVI)-RELATED"/>
    <property type="match status" value="1"/>
</dbReference>
<dbReference type="PANTHER" id="PTHR43775">
    <property type="entry name" value="FATTY ACID SYNTHASE"/>
    <property type="match status" value="1"/>
</dbReference>
<dbReference type="Pfam" id="PF00698">
    <property type="entry name" value="Acyl_transf_1"/>
    <property type="match status" value="1"/>
</dbReference>
<dbReference type="Pfam" id="PF16197">
    <property type="entry name" value="KAsynt_C_assoc"/>
    <property type="match status" value="1"/>
</dbReference>
<dbReference type="Pfam" id="PF00109">
    <property type="entry name" value="ketoacyl-synt"/>
    <property type="match status" value="1"/>
</dbReference>
<dbReference type="Pfam" id="PF02801">
    <property type="entry name" value="Ketoacyl-synt_C"/>
    <property type="match status" value="1"/>
</dbReference>
<dbReference type="Pfam" id="PF08659">
    <property type="entry name" value="KR"/>
    <property type="match status" value="1"/>
</dbReference>
<dbReference type="Pfam" id="PF23114">
    <property type="entry name" value="NAD-bd_HRPKS_sdrA"/>
    <property type="match status" value="1"/>
</dbReference>
<dbReference type="Pfam" id="PF21089">
    <property type="entry name" value="PKS_DH_N"/>
    <property type="match status" value="1"/>
</dbReference>
<dbReference type="Pfam" id="PF14765">
    <property type="entry name" value="PS-DH"/>
    <property type="match status" value="1"/>
</dbReference>
<dbReference type="SMART" id="SM00827">
    <property type="entry name" value="PKS_AT"/>
    <property type="match status" value="1"/>
</dbReference>
<dbReference type="SMART" id="SM00826">
    <property type="entry name" value="PKS_DH"/>
    <property type="match status" value="1"/>
</dbReference>
<dbReference type="SMART" id="SM00829">
    <property type="entry name" value="PKS_ER"/>
    <property type="match status" value="1"/>
</dbReference>
<dbReference type="SMART" id="SM00822">
    <property type="entry name" value="PKS_KR"/>
    <property type="match status" value="1"/>
</dbReference>
<dbReference type="SMART" id="SM00825">
    <property type="entry name" value="PKS_KS"/>
    <property type="match status" value="1"/>
</dbReference>
<dbReference type="SMART" id="SM00823">
    <property type="entry name" value="PKS_PP"/>
    <property type="match status" value="1"/>
</dbReference>
<dbReference type="SUPFAM" id="SSF47336">
    <property type="entry name" value="ACP-like"/>
    <property type="match status" value="1"/>
</dbReference>
<dbReference type="SUPFAM" id="SSF52151">
    <property type="entry name" value="FabD/lysophospholipase-like"/>
    <property type="match status" value="1"/>
</dbReference>
<dbReference type="SUPFAM" id="SSF50129">
    <property type="entry name" value="GroES-like"/>
    <property type="match status" value="1"/>
</dbReference>
<dbReference type="SUPFAM" id="SSF51735">
    <property type="entry name" value="NAD(P)-binding Rossmann-fold domains"/>
    <property type="match status" value="2"/>
</dbReference>
<dbReference type="SUPFAM" id="SSF55048">
    <property type="entry name" value="Probable ACP-binding domain of malonyl-CoA ACP transacylase"/>
    <property type="match status" value="1"/>
</dbReference>
<dbReference type="SUPFAM" id="SSF53901">
    <property type="entry name" value="Thiolase-like"/>
    <property type="match status" value="1"/>
</dbReference>
<dbReference type="PROSITE" id="PS50075">
    <property type="entry name" value="CARRIER"/>
    <property type="match status" value="1"/>
</dbReference>
<dbReference type="PROSITE" id="PS52004">
    <property type="entry name" value="KS3_2"/>
    <property type="match status" value="1"/>
</dbReference>
<dbReference type="PROSITE" id="PS52019">
    <property type="entry name" value="PKS_MFAS_DH"/>
    <property type="match status" value="1"/>
</dbReference>